<proteinExistence type="inferred from homology"/>
<protein>
    <recommendedName>
        <fullName evidence="1">Ribonuclease HII</fullName>
        <shortName evidence="1">RNase HII</shortName>
        <ecNumber evidence="1">3.1.26.4</ecNumber>
    </recommendedName>
</protein>
<evidence type="ECO:0000255" key="1">
    <source>
        <dbReference type="HAMAP-Rule" id="MF_00052"/>
    </source>
</evidence>
<evidence type="ECO:0000255" key="2">
    <source>
        <dbReference type="PROSITE-ProRule" id="PRU01319"/>
    </source>
</evidence>
<reference key="1">
    <citation type="journal article" date="2011" name="PLoS Genet.">
        <title>The evolution of host specialization in the vertebrate gut symbiont Lactobacillus reuteri.</title>
        <authorList>
            <person name="Frese S.A."/>
            <person name="Benson A.K."/>
            <person name="Tannock G.W."/>
            <person name="Loach D.M."/>
            <person name="Kim J."/>
            <person name="Zhang M."/>
            <person name="Oh P.L."/>
            <person name="Heng N.C."/>
            <person name="Patil P.B."/>
            <person name="Juge N."/>
            <person name="Mackenzie D.A."/>
            <person name="Pearson B.M."/>
            <person name="Lapidus A."/>
            <person name="Dalin E."/>
            <person name="Tice H."/>
            <person name="Goltsman E."/>
            <person name="Land M."/>
            <person name="Hauser L."/>
            <person name="Ivanova N."/>
            <person name="Kyrpides N.C."/>
            <person name="Walter J."/>
        </authorList>
    </citation>
    <scope>NUCLEOTIDE SEQUENCE [LARGE SCALE GENOMIC DNA]</scope>
    <source>
        <strain>DSM 20016</strain>
    </source>
</reference>
<accession>A5VJL7</accession>
<organism>
    <name type="scientific">Limosilactobacillus reuteri (strain DSM 20016)</name>
    <name type="common">Lactobacillus reuteri</name>
    <dbReference type="NCBI Taxonomy" id="557436"/>
    <lineage>
        <taxon>Bacteria</taxon>
        <taxon>Bacillati</taxon>
        <taxon>Bacillota</taxon>
        <taxon>Bacilli</taxon>
        <taxon>Lactobacillales</taxon>
        <taxon>Lactobacillaceae</taxon>
        <taxon>Limosilactobacillus</taxon>
    </lineage>
</organism>
<dbReference type="EC" id="3.1.26.4" evidence="1"/>
<dbReference type="EMBL" id="CP000705">
    <property type="protein sequence ID" value="ABQ83041.1"/>
    <property type="molecule type" value="Genomic_DNA"/>
</dbReference>
<dbReference type="RefSeq" id="WP_003668089.1">
    <property type="nucleotide sequence ID" value="NC_009513.1"/>
</dbReference>
<dbReference type="SMR" id="A5VJL7"/>
<dbReference type="STRING" id="557436.Lreu_0777"/>
<dbReference type="KEGG" id="lre:Lreu_0777"/>
<dbReference type="PATRIC" id="fig|557436.17.peg.451"/>
<dbReference type="eggNOG" id="COG0164">
    <property type="taxonomic scope" value="Bacteria"/>
</dbReference>
<dbReference type="HOGENOM" id="CLU_036532_2_1_9"/>
<dbReference type="Proteomes" id="UP000001991">
    <property type="component" value="Chromosome"/>
</dbReference>
<dbReference type="GO" id="GO:0005737">
    <property type="term" value="C:cytoplasm"/>
    <property type="evidence" value="ECO:0007669"/>
    <property type="project" value="UniProtKB-SubCell"/>
</dbReference>
<dbReference type="GO" id="GO:0032299">
    <property type="term" value="C:ribonuclease H2 complex"/>
    <property type="evidence" value="ECO:0007669"/>
    <property type="project" value="TreeGrafter"/>
</dbReference>
<dbReference type="GO" id="GO:0030145">
    <property type="term" value="F:manganese ion binding"/>
    <property type="evidence" value="ECO:0007669"/>
    <property type="project" value="UniProtKB-UniRule"/>
</dbReference>
<dbReference type="GO" id="GO:0003723">
    <property type="term" value="F:RNA binding"/>
    <property type="evidence" value="ECO:0007669"/>
    <property type="project" value="InterPro"/>
</dbReference>
<dbReference type="GO" id="GO:0004523">
    <property type="term" value="F:RNA-DNA hybrid ribonuclease activity"/>
    <property type="evidence" value="ECO:0007669"/>
    <property type="project" value="UniProtKB-UniRule"/>
</dbReference>
<dbReference type="GO" id="GO:0043137">
    <property type="term" value="P:DNA replication, removal of RNA primer"/>
    <property type="evidence" value="ECO:0007669"/>
    <property type="project" value="TreeGrafter"/>
</dbReference>
<dbReference type="GO" id="GO:0006298">
    <property type="term" value="P:mismatch repair"/>
    <property type="evidence" value="ECO:0007669"/>
    <property type="project" value="TreeGrafter"/>
</dbReference>
<dbReference type="CDD" id="cd07182">
    <property type="entry name" value="RNase_HII_bacteria_HII_like"/>
    <property type="match status" value="1"/>
</dbReference>
<dbReference type="FunFam" id="3.30.420.10:FF:000006">
    <property type="entry name" value="Ribonuclease HII"/>
    <property type="match status" value="1"/>
</dbReference>
<dbReference type="Gene3D" id="3.30.420.10">
    <property type="entry name" value="Ribonuclease H-like superfamily/Ribonuclease H"/>
    <property type="match status" value="1"/>
</dbReference>
<dbReference type="HAMAP" id="MF_00052_B">
    <property type="entry name" value="RNase_HII_B"/>
    <property type="match status" value="1"/>
</dbReference>
<dbReference type="InterPro" id="IPR022898">
    <property type="entry name" value="RNase_HII"/>
</dbReference>
<dbReference type="InterPro" id="IPR001352">
    <property type="entry name" value="RNase_HII/HIII"/>
</dbReference>
<dbReference type="InterPro" id="IPR024567">
    <property type="entry name" value="RNase_HII/HIII_dom"/>
</dbReference>
<dbReference type="InterPro" id="IPR012337">
    <property type="entry name" value="RNaseH-like_sf"/>
</dbReference>
<dbReference type="InterPro" id="IPR036397">
    <property type="entry name" value="RNaseH_sf"/>
</dbReference>
<dbReference type="NCBIfam" id="NF000594">
    <property type="entry name" value="PRK00015.1-1"/>
    <property type="match status" value="1"/>
</dbReference>
<dbReference type="NCBIfam" id="NF000595">
    <property type="entry name" value="PRK00015.1-3"/>
    <property type="match status" value="1"/>
</dbReference>
<dbReference type="PANTHER" id="PTHR10954">
    <property type="entry name" value="RIBONUCLEASE H2 SUBUNIT A"/>
    <property type="match status" value="1"/>
</dbReference>
<dbReference type="PANTHER" id="PTHR10954:SF18">
    <property type="entry name" value="RIBONUCLEASE HII"/>
    <property type="match status" value="1"/>
</dbReference>
<dbReference type="Pfam" id="PF01351">
    <property type="entry name" value="RNase_HII"/>
    <property type="match status" value="1"/>
</dbReference>
<dbReference type="SUPFAM" id="SSF53098">
    <property type="entry name" value="Ribonuclease H-like"/>
    <property type="match status" value="1"/>
</dbReference>
<dbReference type="PROSITE" id="PS51975">
    <property type="entry name" value="RNASE_H_2"/>
    <property type="match status" value="1"/>
</dbReference>
<sequence>MNKETISQIKARLQTITDTTDPYLQTIHDDSRKGVQTAIQQFERRLARQKEAEEAFNNRFKYEKYYWENGCQYIAGMDEVGRGPLAGPVVTCAVILNADFDLIGVTDSKQLTRHERENLYLRIVDEAVEVSIAVNDAPVIDQMNIYAATQDAMIRAVNHLHHRPDHLIVDAVPLAIDIPQTTLIKGDQKSISVAAASIVAKEYRDHLMRDYDYVYPGYGFAQNMGYGTKEHLAGLEKMGATPIHRRSFNPVPKYLN</sequence>
<gene>
    <name evidence="1" type="primary">rnhB</name>
    <name type="ordered locus">Lreu_0777</name>
</gene>
<comment type="function">
    <text evidence="1">Endonuclease that specifically degrades the RNA of RNA-DNA hybrids.</text>
</comment>
<comment type="catalytic activity">
    <reaction evidence="1">
        <text>Endonucleolytic cleavage to 5'-phosphomonoester.</text>
        <dbReference type="EC" id="3.1.26.4"/>
    </reaction>
</comment>
<comment type="cofactor">
    <cofactor evidence="1">
        <name>Mn(2+)</name>
        <dbReference type="ChEBI" id="CHEBI:29035"/>
    </cofactor>
    <cofactor evidence="1">
        <name>Mg(2+)</name>
        <dbReference type="ChEBI" id="CHEBI:18420"/>
    </cofactor>
    <text evidence="1">Manganese or magnesium. Binds 1 divalent metal ion per monomer in the absence of substrate. May bind a second metal ion after substrate binding.</text>
</comment>
<comment type="subcellular location">
    <subcellularLocation>
        <location evidence="1">Cytoplasm</location>
    </subcellularLocation>
</comment>
<comment type="similarity">
    <text evidence="1">Belongs to the RNase HII family.</text>
</comment>
<keyword id="KW-0963">Cytoplasm</keyword>
<keyword id="KW-0255">Endonuclease</keyword>
<keyword id="KW-0378">Hydrolase</keyword>
<keyword id="KW-0464">Manganese</keyword>
<keyword id="KW-0479">Metal-binding</keyword>
<keyword id="KW-0540">Nuclease</keyword>
<keyword id="KW-1185">Reference proteome</keyword>
<name>RNH2_LIMRD</name>
<feature type="chain" id="PRO_1000057379" description="Ribonuclease HII">
    <location>
        <begin position="1"/>
        <end position="256"/>
    </location>
</feature>
<feature type="domain" description="RNase H type-2" evidence="2">
    <location>
        <begin position="72"/>
        <end position="256"/>
    </location>
</feature>
<feature type="binding site" evidence="1">
    <location>
        <position position="78"/>
    </location>
    <ligand>
        <name>a divalent metal cation</name>
        <dbReference type="ChEBI" id="CHEBI:60240"/>
    </ligand>
</feature>
<feature type="binding site" evidence="1">
    <location>
        <position position="79"/>
    </location>
    <ligand>
        <name>a divalent metal cation</name>
        <dbReference type="ChEBI" id="CHEBI:60240"/>
    </ligand>
</feature>
<feature type="binding site" evidence="1">
    <location>
        <position position="170"/>
    </location>
    <ligand>
        <name>a divalent metal cation</name>
        <dbReference type="ChEBI" id="CHEBI:60240"/>
    </ligand>
</feature>